<organism>
    <name type="scientific">Xanthomonas campestris pv. campestris (strain B100)</name>
    <dbReference type="NCBI Taxonomy" id="509169"/>
    <lineage>
        <taxon>Bacteria</taxon>
        <taxon>Pseudomonadati</taxon>
        <taxon>Pseudomonadota</taxon>
        <taxon>Gammaproteobacteria</taxon>
        <taxon>Lysobacterales</taxon>
        <taxon>Lysobacteraceae</taxon>
        <taxon>Xanthomonas</taxon>
    </lineage>
</organism>
<dbReference type="EMBL" id="AM920689">
    <property type="protein sequence ID" value="CAP52723.1"/>
    <property type="molecule type" value="Genomic_DNA"/>
</dbReference>
<dbReference type="SMR" id="B0RYK3"/>
<dbReference type="KEGG" id="xca:xcc-b100_3358"/>
<dbReference type="HOGENOM" id="CLU_140930_0_0_6"/>
<dbReference type="Proteomes" id="UP000001188">
    <property type="component" value="Chromosome"/>
</dbReference>
<dbReference type="GO" id="GO:0043590">
    <property type="term" value="C:bacterial nucleoid"/>
    <property type="evidence" value="ECO:0007669"/>
    <property type="project" value="UniProtKB-UniRule"/>
</dbReference>
<dbReference type="GO" id="GO:0005829">
    <property type="term" value="C:cytosol"/>
    <property type="evidence" value="ECO:0007669"/>
    <property type="project" value="TreeGrafter"/>
</dbReference>
<dbReference type="GO" id="GO:0003677">
    <property type="term" value="F:DNA binding"/>
    <property type="evidence" value="ECO:0007669"/>
    <property type="project" value="UniProtKB-UniRule"/>
</dbReference>
<dbReference type="FunFam" id="3.30.1310.10:FF:000001">
    <property type="entry name" value="Nucleoid-associated protein YbaB"/>
    <property type="match status" value="1"/>
</dbReference>
<dbReference type="Gene3D" id="3.30.1310.10">
    <property type="entry name" value="Nucleoid-associated protein YbaB-like domain"/>
    <property type="match status" value="1"/>
</dbReference>
<dbReference type="HAMAP" id="MF_00274">
    <property type="entry name" value="DNA_YbaB_EbfC"/>
    <property type="match status" value="1"/>
</dbReference>
<dbReference type="InterPro" id="IPR036894">
    <property type="entry name" value="YbaB-like_sf"/>
</dbReference>
<dbReference type="InterPro" id="IPR004401">
    <property type="entry name" value="YbaB/EbfC"/>
</dbReference>
<dbReference type="NCBIfam" id="TIGR00103">
    <property type="entry name" value="DNA_YbaB_EbfC"/>
    <property type="match status" value="1"/>
</dbReference>
<dbReference type="PANTHER" id="PTHR33449">
    <property type="entry name" value="NUCLEOID-ASSOCIATED PROTEIN YBAB"/>
    <property type="match status" value="1"/>
</dbReference>
<dbReference type="PANTHER" id="PTHR33449:SF1">
    <property type="entry name" value="NUCLEOID-ASSOCIATED PROTEIN YBAB"/>
    <property type="match status" value="1"/>
</dbReference>
<dbReference type="Pfam" id="PF02575">
    <property type="entry name" value="YbaB_DNA_bd"/>
    <property type="match status" value="1"/>
</dbReference>
<dbReference type="PIRSF" id="PIRSF004555">
    <property type="entry name" value="UCP004555"/>
    <property type="match status" value="1"/>
</dbReference>
<dbReference type="SUPFAM" id="SSF82607">
    <property type="entry name" value="YbaB-like"/>
    <property type="match status" value="1"/>
</dbReference>
<name>Y3358_XANCB</name>
<feature type="chain" id="PRO_1000114663" description="Nucleoid-associated protein xcc-b100_3358">
    <location>
        <begin position="1"/>
        <end position="106"/>
    </location>
</feature>
<feature type="region of interest" description="Disordered" evidence="2">
    <location>
        <begin position="82"/>
        <end position="106"/>
    </location>
</feature>
<sequence length="106" mass="11382">MRGNIAQLMQQAQKMQENLQRAQEELAKLEVTGSAGGGMVSVTLTGAKECRKVRIDPSILSDQEMAEDLIAAAFNDASNKIDAESKERMGSATAGMQLPPGMKLPF</sequence>
<protein>
    <recommendedName>
        <fullName evidence="1">Nucleoid-associated protein xcc-b100_3358</fullName>
    </recommendedName>
</protein>
<gene>
    <name type="ordered locus">xcc-b100_3358</name>
</gene>
<keyword id="KW-0963">Cytoplasm</keyword>
<keyword id="KW-0238">DNA-binding</keyword>
<accession>B0RYK3</accession>
<reference key="1">
    <citation type="journal article" date="2008" name="J. Biotechnol.">
        <title>The genome of Xanthomonas campestris pv. campestris B100 and its use for the reconstruction of metabolic pathways involved in xanthan biosynthesis.</title>
        <authorList>
            <person name="Vorhoelter F.-J."/>
            <person name="Schneiker S."/>
            <person name="Goesmann A."/>
            <person name="Krause L."/>
            <person name="Bekel T."/>
            <person name="Kaiser O."/>
            <person name="Linke B."/>
            <person name="Patschkowski T."/>
            <person name="Rueckert C."/>
            <person name="Schmid J."/>
            <person name="Sidhu V.K."/>
            <person name="Sieber V."/>
            <person name="Tauch A."/>
            <person name="Watt S.A."/>
            <person name="Weisshaar B."/>
            <person name="Becker A."/>
            <person name="Niehaus K."/>
            <person name="Puehler A."/>
        </authorList>
    </citation>
    <scope>NUCLEOTIDE SEQUENCE [LARGE SCALE GENOMIC DNA]</scope>
    <source>
        <strain>B100</strain>
    </source>
</reference>
<proteinExistence type="inferred from homology"/>
<evidence type="ECO:0000255" key="1">
    <source>
        <dbReference type="HAMAP-Rule" id="MF_00274"/>
    </source>
</evidence>
<evidence type="ECO:0000256" key="2">
    <source>
        <dbReference type="SAM" id="MobiDB-lite"/>
    </source>
</evidence>
<comment type="function">
    <text evidence="1">Binds to DNA and alters its conformation. May be involved in regulation of gene expression, nucleoid organization and DNA protection.</text>
</comment>
<comment type="subunit">
    <text evidence="1">Homodimer.</text>
</comment>
<comment type="subcellular location">
    <subcellularLocation>
        <location evidence="1">Cytoplasm</location>
        <location evidence="1">Nucleoid</location>
    </subcellularLocation>
</comment>
<comment type="similarity">
    <text evidence="1">Belongs to the YbaB/EbfC family.</text>
</comment>